<sequence>MSLPKIAISVGDINGVGIEIALKSHDEIKNICSPIYFINNELLNSAANILKFTVPNDFEIFECGSSFNIKPGRVSKKSGKFSFVSFENAILYTQNKRAQALVTMPINKESWKKAGVPYVGHTDALGKYFGKNAIMMLGCEELFVALYTDHLALKDVSAKIKAKNLALFLVDFYNSSKFENIGVLGFNPHASDNETIGGKEEKEIIKAIKSANNRLKKEVFTGPLVPDAAFTKSSLKRCNRLVSMYHDVGLAPLKALYFDKSINVSLNLPIVRTSVDHGTAFDIAYKGKAETKSYIEAIKFAIKLCDY</sequence>
<accession>A0RNS3</accession>
<protein>
    <recommendedName>
        <fullName evidence="1">4-hydroxythreonine-4-phosphate dehydrogenase</fullName>
        <ecNumber evidence="1">1.1.1.262</ecNumber>
    </recommendedName>
    <alternativeName>
        <fullName evidence="1">4-(phosphohydroxy)-L-threonine dehydrogenase</fullName>
    </alternativeName>
</protein>
<organism>
    <name type="scientific">Campylobacter fetus subsp. fetus (strain 82-40)</name>
    <dbReference type="NCBI Taxonomy" id="360106"/>
    <lineage>
        <taxon>Bacteria</taxon>
        <taxon>Pseudomonadati</taxon>
        <taxon>Campylobacterota</taxon>
        <taxon>Epsilonproteobacteria</taxon>
        <taxon>Campylobacterales</taxon>
        <taxon>Campylobacteraceae</taxon>
        <taxon>Campylobacter</taxon>
    </lineage>
</organism>
<reference key="1">
    <citation type="submission" date="2006-11" db="EMBL/GenBank/DDBJ databases">
        <title>Sequence of Campylobacter fetus subsp. fetus 82-40.</title>
        <authorList>
            <person name="Fouts D.E."/>
            <person name="Nelson K.E."/>
        </authorList>
    </citation>
    <scope>NUCLEOTIDE SEQUENCE [LARGE SCALE GENOMIC DNA]</scope>
    <source>
        <strain>82-40</strain>
    </source>
</reference>
<evidence type="ECO:0000255" key="1">
    <source>
        <dbReference type="HAMAP-Rule" id="MF_02086"/>
    </source>
</evidence>
<proteinExistence type="inferred from homology"/>
<feature type="chain" id="PRO_1000051492" description="4-hydroxythreonine-4-phosphate dehydrogenase">
    <location>
        <begin position="1"/>
        <end position="307"/>
    </location>
</feature>
<feature type="binding site" evidence="1">
    <location>
        <position position="121"/>
    </location>
    <ligand>
        <name>substrate</name>
    </ligand>
</feature>
<feature type="binding site" evidence="1">
    <location>
        <position position="122"/>
    </location>
    <ligand>
        <name>substrate</name>
    </ligand>
</feature>
<feature type="binding site" evidence="1">
    <location>
        <position position="150"/>
    </location>
    <ligand>
        <name>a divalent metal cation</name>
        <dbReference type="ChEBI" id="CHEBI:60240"/>
        <note>ligand shared between dimeric partners</note>
    </ligand>
</feature>
<feature type="binding site" evidence="1">
    <location>
        <position position="189"/>
    </location>
    <ligand>
        <name>a divalent metal cation</name>
        <dbReference type="ChEBI" id="CHEBI:60240"/>
        <note>ligand shared between dimeric partners</note>
    </ligand>
</feature>
<feature type="binding site" evidence="1">
    <location>
        <position position="246"/>
    </location>
    <ligand>
        <name>a divalent metal cation</name>
        <dbReference type="ChEBI" id="CHEBI:60240"/>
        <note>ligand shared between dimeric partners</note>
    </ligand>
</feature>
<feature type="binding site" evidence="1">
    <location>
        <position position="254"/>
    </location>
    <ligand>
        <name>substrate</name>
    </ligand>
</feature>
<feature type="binding site" evidence="1">
    <location>
        <position position="263"/>
    </location>
    <ligand>
        <name>substrate</name>
    </ligand>
</feature>
<feature type="binding site" evidence="1">
    <location>
        <position position="272"/>
    </location>
    <ligand>
        <name>substrate</name>
    </ligand>
</feature>
<keyword id="KW-0170">Cobalt</keyword>
<keyword id="KW-0963">Cytoplasm</keyword>
<keyword id="KW-0460">Magnesium</keyword>
<keyword id="KW-0479">Metal-binding</keyword>
<keyword id="KW-0520">NAD</keyword>
<keyword id="KW-0521">NADP</keyword>
<keyword id="KW-0560">Oxidoreductase</keyword>
<keyword id="KW-0664">Pyridoxine biosynthesis</keyword>
<keyword id="KW-0862">Zinc</keyword>
<dbReference type="EC" id="1.1.1.262" evidence="1"/>
<dbReference type="EMBL" id="CP000487">
    <property type="protein sequence ID" value="ABK83061.1"/>
    <property type="molecule type" value="Genomic_DNA"/>
</dbReference>
<dbReference type="RefSeq" id="WP_011731912.1">
    <property type="nucleotide sequence ID" value="NC_008599.1"/>
</dbReference>
<dbReference type="SMR" id="A0RNS3"/>
<dbReference type="GeneID" id="61064522"/>
<dbReference type="KEGG" id="cff:CFF8240_0681"/>
<dbReference type="eggNOG" id="COG1995">
    <property type="taxonomic scope" value="Bacteria"/>
</dbReference>
<dbReference type="HOGENOM" id="CLU_040168_0_0_7"/>
<dbReference type="UniPathway" id="UPA00244">
    <property type="reaction ID" value="UER00312"/>
</dbReference>
<dbReference type="Proteomes" id="UP000000760">
    <property type="component" value="Chromosome"/>
</dbReference>
<dbReference type="GO" id="GO:0005737">
    <property type="term" value="C:cytoplasm"/>
    <property type="evidence" value="ECO:0007669"/>
    <property type="project" value="UniProtKB-SubCell"/>
</dbReference>
<dbReference type="GO" id="GO:0050570">
    <property type="term" value="F:4-hydroxythreonine-4-phosphate dehydrogenase activity"/>
    <property type="evidence" value="ECO:0007669"/>
    <property type="project" value="UniProtKB-UniRule"/>
</dbReference>
<dbReference type="GO" id="GO:0050897">
    <property type="term" value="F:cobalt ion binding"/>
    <property type="evidence" value="ECO:0007669"/>
    <property type="project" value="UniProtKB-UniRule"/>
</dbReference>
<dbReference type="GO" id="GO:0000287">
    <property type="term" value="F:magnesium ion binding"/>
    <property type="evidence" value="ECO:0007669"/>
    <property type="project" value="UniProtKB-UniRule"/>
</dbReference>
<dbReference type="GO" id="GO:0051287">
    <property type="term" value="F:NAD binding"/>
    <property type="evidence" value="ECO:0007669"/>
    <property type="project" value="InterPro"/>
</dbReference>
<dbReference type="GO" id="GO:0008270">
    <property type="term" value="F:zinc ion binding"/>
    <property type="evidence" value="ECO:0007669"/>
    <property type="project" value="UniProtKB-UniRule"/>
</dbReference>
<dbReference type="GO" id="GO:0042823">
    <property type="term" value="P:pyridoxal phosphate biosynthetic process"/>
    <property type="evidence" value="ECO:0007669"/>
    <property type="project" value="UniProtKB-UniRule"/>
</dbReference>
<dbReference type="GO" id="GO:0008615">
    <property type="term" value="P:pyridoxine biosynthetic process"/>
    <property type="evidence" value="ECO:0007669"/>
    <property type="project" value="UniProtKB-UniRule"/>
</dbReference>
<dbReference type="Gene3D" id="3.40.718.10">
    <property type="entry name" value="Isopropylmalate Dehydrogenase"/>
    <property type="match status" value="1"/>
</dbReference>
<dbReference type="HAMAP" id="MF_02086">
    <property type="entry name" value="PdxA_Epsilonprot"/>
    <property type="match status" value="1"/>
</dbReference>
<dbReference type="InterPro" id="IPR037539">
    <property type="entry name" value="PdxA_epsilonprot"/>
</dbReference>
<dbReference type="InterPro" id="IPR005255">
    <property type="entry name" value="PdxA_fam"/>
</dbReference>
<dbReference type="NCBIfam" id="TIGR00557">
    <property type="entry name" value="pdxA"/>
    <property type="match status" value="1"/>
</dbReference>
<dbReference type="NCBIfam" id="NF003040">
    <property type="entry name" value="PRK03946.1"/>
    <property type="match status" value="1"/>
</dbReference>
<dbReference type="PANTHER" id="PTHR30004">
    <property type="entry name" value="4-HYDROXYTHREONINE-4-PHOSPHATE DEHYDROGENASE"/>
    <property type="match status" value="1"/>
</dbReference>
<dbReference type="PANTHER" id="PTHR30004:SF6">
    <property type="entry name" value="D-THREONATE 4-PHOSPHATE DEHYDROGENASE"/>
    <property type="match status" value="1"/>
</dbReference>
<dbReference type="Pfam" id="PF04166">
    <property type="entry name" value="PdxA"/>
    <property type="match status" value="1"/>
</dbReference>
<dbReference type="SUPFAM" id="SSF53659">
    <property type="entry name" value="Isocitrate/Isopropylmalate dehydrogenase-like"/>
    <property type="match status" value="1"/>
</dbReference>
<name>PDXA_CAMFF</name>
<gene>
    <name evidence="1" type="primary">pdxA</name>
    <name type="ordered locus">CFF8240_0681</name>
</gene>
<comment type="function">
    <text evidence="1">Catalyzes the NAD(P)-dependent oxidation of 4-(phosphooxy)-L-threonine (HTP) into 2-amino-3-oxo-4-(phosphooxy)butyric acid which spontaneously decarboxylates to form 3-amino-2-oxopropyl phosphate (AHAP).</text>
</comment>
<comment type="catalytic activity">
    <reaction evidence="1">
        <text>4-(phosphooxy)-L-threonine + NAD(+) = 3-amino-2-oxopropyl phosphate + CO2 + NADH</text>
        <dbReference type="Rhea" id="RHEA:32275"/>
        <dbReference type="ChEBI" id="CHEBI:16526"/>
        <dbReference type="ChEBI" id="CHEBI:57279"/>
        <dbReference type="ChEBI" id="CHEBI:57540"/>
        <dbReference type="ChEBI" id="CHEBI:57945"/>
        <dbReference type="ChEBI" id="CHEBI:58452"/>
        <dbReference type="EC" id="1.1.1.262"/>
    </reaction>
</comment>
<comment type="cofactor">
    <cofactor evidence="1">
        <name>Zn(2+)</name>
        <dbReference type="ChEBI" id="CHEBI:29105"/>
    </cofactor>
    <cofactor evidence="1">
        <name>Mg(2+)</name>
        <dbReference type="ChEBI" id="CHEBI:18420"/>
    </cofactor>
    <cofactor evidence="1">
        <name>Co(2+)</name>
        <dbReference type="ChEBI" id="CHEBI:48828"/>
    </cofactor>
</comment>
<comment type="pathway">
    <text evidence="1">Cofactor biosynthesis; pyridoxine 5'-phosphate biosynthesis; pyridoxine 5'-phosphate from D-erythrose 4-phosphate: step 4/5.</text>
</comment>
<comment type="subunit">
    <text evidence="1">Homodimer.</text>
</comment>
<comment type="subcellular location">
    <subcellularLocation>
        <location evidence="1">Cytoplasm</location>
    </subcellularLocation>
</comment>
<comment type="miscellaneous">
    <text evidence="1">The active site is located at the dimer interface.</text>
</comment>
<comment type="similarity">
    <text evidence="1">Belongs to the PdxA family.</text>
</comment>